<gene>
    <name evidence="1" type="primary">rpmG</name>
    <name type="ordered locus">Cphamn1_0975</name>
</gene>
<keyword id="KW-0687">Ribonucleoprotein</keyword>
<keyword id="KW-0689">Ribosomal protein</keyword>
<comment type="similarity">
    <text evidence="1">Belongs to the bacterial ribosomal protein bL33 family.</text>
</comment>
<organism>
    <name type="scientific">Chlorobium phaeobacteroides (strain BS1)</name>
    <dbReference type="NCBI Taxonomy" id="331678"/>
    <lineage>
        <taxon>Bacteria</taxon>
        <taxon>Pseudomonadati</taxon>
        <taxon>Chlorobiota</taxon>
        <taxon>Chlorobiia</taxon>
        <taxon>Chlorobiales</taxon>
        <taxon>Chlorobiaceae</taxon>
        <taxon>Chlorobium/Pelodictyon group</taxon>
        <taxon>Chlorobium</taxon>
    </lineage>
</organism>
<protein>
    <recommendedName>
        <fullName evidence="1">Large ribosomal subunit protein bL33</fullName>
    </recommendedName>
    <alternativeName>
        <fullName evidence="3">50S ribosomal protein L33</fullName>
    </alternativeName>
</protein>
<sequence length="59" mass="7011">MAKKENRIIITLECTEARKEGLTPSRYTTTKNKKNNTERLVLKKYNPNLKKHTEHKEIK</sequence>
<reference key="1">
    <citation type="submission" date="2008-06" db="EMBL/GenBank/DDBJ databases">
        <title>Complete sequence of Chlorobium phaeobacteroides BS1.</title>
        <authorList>
            <consortium name="US DOE Joint Genome Institute"/>
            <person name="Lucas S."/>
            <person name="Copeland A."/>
            <person name="Lapidus A."/>
            <person name="Glavina del Rio T."/>
            <person name="Dalin E."/>
            <person name="Tice H."/>
            <person name="Bruce D."/>
            <person name="Goodwin L."/>
            <person name="Pitluck S."/>
            <person name="Schmutz J."/>
            <person name="Larimer F."/>
            <person name="Land M."/>
            <person name="Hauser L."/>
            <person name="Kyrpides N."/>
            <person name="Ovchinnikova G."/>
            <person name="Li T."/>
            <person name="Liu Z."/>
            <person name="Zhao F."/>
            <person name="Overmann J."/>
            <person name="Bryant D.A."/>
            <person name="Richardson P."/>
        </authorList>
    </citation>
    <scope>NUCLEOTIDE SEQUENCE [LARGE SCALE GENOMIC DNA]</scope>
    <source>
        <strain>BS1</strain>
    </source>
</reference>
<evidence type="ECO:0000255" key="1">
    <source>
        <dbReference type="HAMAP-Rule" id="MF_00294"/>
    </source>
</evidence>
<evidence type="ECO:0000256" key="2">
    <source>
        <dbReference type="SAM" id="MobiDB-lite"/>
    </source>
</evidence>
<evidence type="ECO:0000305" key="3"/>
<feature type="chain" id="PRO_1000115124" description="Large ribosomal subunit protein bL33">
    <location>
        <begin position="1"/>
        <end position="59"/>
    </location>
</feature>
<feature type="region of interest" description="Disordered" evidence="2">
    <location>
        <begin position="26"/>
        <end position="59"/>
    </location>
</feature>
<accession>B3EPY6</accession>
<proteinExistence type="inferred from homology"/>
<dbReference type="EMBL" id="CP001101">
    <property type="protein sequence ID" value="ACE03918.1"/>
    <property type="molecule type" value="Genomic_DNA"/>
</dbReference>
<dbReference type="SMR" id="B3EPY6"/>
<dbReference type="STRING" id="331678.Cphamn1_0975"/>
<dbReference type="KEGG" id="cpb:Cphamn1_0975"/>
<dbReference type="eggNOG" id="COG0267">
    <property type="taxonomic scope" value="Bacteria"/>
</dbReference>
<dbReference type="HOGENOM" id="CLU_190949_3_0_10"/>
<dbReference type="GO" id="GO:0005737">
    <property type="term" value="C:cytoplasm"/>
    <property type="evidence" value="ECO:0007669"/>
    <property type="project" value="UniProtKB-ARBA"/>
</dbReference>
<dbReference type="GO" id="GO:1990904">
    <property type="term" value="C:ribonucleoprotein complex"/>
    <property type="evidence" value="ECO:0007669"/>
    <property type="project" value="UniProtKB-KW"/>
</dbReference>
<dbReference type="GO" id="GO:0005840">
    <property type="term" value="C:ribosome"/>
    <property type="evidence" value="ECO:0007669"/>
    <property type="project" value="UniProtKB-KW"/>
</dbReference>
<dbReference type="GO" id="GO:0003735">
    <property type="term" value="F:structural constituent of ribosome"/>
    <property type="evidence" value="ECO:0007669"/>
    <property type="project" value="InterPro"/>
</dbReference>
<dbReference type="GO" id="GO:0006412">
    <property type="term" value="P:translation"/>
    <property type="evidence" value="ECO:0007669"/>
    <property type="project" value="UniProtKB-UniRule"/>
</dbReference>
<dbReference type="Gene3D" id="2.20.28.120">
    <property type="entry name" value="Ribosomal protein L33"/>
    <property type="match status" value="1"/>
</dbReference>
<dbReference type="HAMAP" id="MF_00294">
    <property type="entry name" value="Ribosomal_bL33"/>
    <property type="match status" value="1"/>
</dbReference>
<dbReference type="InterPro" id="IPR001705">
    <property type="entry name" value="Ribosomal_bL33"/>
</dbReference>
<dbReference type="InterPro" id="IPR038584">
    <property type="entry name" value="Ribosomal_bL33_sf"/>
</dbReference>
<dbReference type="InterPro" id="IPR011332">
    <property type="entry name" value="Ribosomal_zn-bd"/>
</dbReference>
<dbReference type="NCBIfam" id="NF001764">
    <property type="entry name" value="PRK00504.1"/>
    <property type="match status" value="1"/>
</dbReference>
<dbReference type="NCBIfam" id="NF001860">
    <property type="entry name" value="PRK00595.1"/>
    <property type="match status" value="1"/>
</dbReference>
<dbReference type="NCBIfam" id="TIGR01023">
    <property type="entry name" value="rpmG_bact"/>
    <property type="match status" value="1"/>
</dbReference>
<dbReference type="PANTHER" id="PTHR43168">
    <property type="entry name" value="50S RIBOSOMAL PROTEIN L33, CHLOROPLASTIC"/>
    <property type="match status" value="1"/>
</dbReference>
<dbReference type="PANTHER" id="PTHR43168:SF2">
    <property type="entry name" value="LARGE RIBOSOMAL SUBUNIT PROTEIN BL33C"/>
    <property type="match status" value="1"/>
</dbReference>
<dbReference type="Pfam" id="PF00471">
    <property type="entry name" value="Ribosomal_L33"/>
    <property type="match status" value="1"/>
</dbReference>
<dbReference type="SUPFAM" id="SSF57829">
    <property type="entry name" value="Zn-binding ribosomal proteins"/>
    <property type="match status" value="1"/>
</dbReference>
<name>RL33_CHLPB</name>